<evidence type="ECO:0000255" key="1">
    <source>
        <dbReference type="HAMAP-Rule" id="MF_00719"/>
    </source>
</evidence>
<reference key="1">
    <citation type="journal article" date="2010" name="Appl. Environ. Microbiol.">
        <title>Conserved symbiotic plasmid DNA sequences in the multireplicon pangenomic structure of Rhizobium etli.</title>
        <authorList>
            <person name="Gonzalez V."/>
            <person name="Acosta J.L."/>
            <person name="Santamaria R.I."/>
            <person name="Bustos P."/>
            <person name="Fernandez J.L."/>
            <person name="Hernandez Gonzalez I.L."/>
            <person name="Diaz R."/>
            <person name="Flores M."/>
            <person name="Palacios R."/>
            <person name="Mora J."/>
            <person name="Davila G."/>
        </authorList>
    </citation>
    <scope>NUCLEOTIDE SEQUENCE [LARGE SCALE GENOMIC DNA]</scope>
    <source>
        <strain>CIAT 652</strain>
    </source>
</reference>
<protein>
    <recommendedName>
        <fullName evidence="1">Adenosylcobinamide-GDP ribazoletransferase</fullName>
        <ecNumber evidence="1">2.7.8.26</ecNumber>
    </recommendedName>
    <alternativeName>
        <fullName evidence="1">Cobalamin synthase</fullName>
    </alternativeName>
    <alternativeName>
        <fullName evidence="1">Cobalamin-5'-phosphate synthase</fullName>
    </alternativeName>
</protein>
<gene>
    <name evidence="1" type="primary">cobS</name>
    <name type="ordered locus">RHECIAT_CH0002545</name>
</gene>
<dbReference type="EC" id="2.7.8.26" evidence="1"/>
<dbReference type="EMBL" id="CP001074">
    <property type="protein sequence ID" value="ACE91497.1"/>
    <property type="molecule type" value="Genomic_DNA"/>
</dbReference>
<dbReference type="KEGG" id="rec:RHECIAT_CH0002545"/>
<dbReference type="eggNOG" id="COG0368">
    <property type="taxonomic scope" value="Bacteria"/>
</dbReference>
<dbReference type="HOGENOM" id="CLU_057426_1_0_5"/>
<dbReference type="UniPathway" id="UPA00148">
    <property type="reaction ID" value="UER00238"/>
</dbReference>
<dbReference type="Proteomes" id="UP000008817">
    <property type="component" value="Chromosome"/>
</dbReference>
<dbReference type="GO" id="GO:0005886">
    <property type="term" value="C:plasma membrane"/>
    <property type="evidence" value="ECO:0007669"/>
    <property type="project" value="UniProtKB-SubCell"/>
</dbReference>
<dbReference type="GO" id="GO:0051073">
    <property type="term" value="F:adenosylcobinamide-GDP ribazoletransferase activity"/>
    <property type="evidence" value="ECO:0007669"/>
    <property type="project" value="UniProtKB-UniRule"/>
</dbReference>
<dbReference type="GO" id="GO:0008818">
    <property type="term" value="F:cobalamin 5'-phosphate synthase activity"/>
    <property type="evidence" value="ECO:0007669"/>
    <property type="project" value="UniProtKB-UniRule"/>
</dbReference>
<dbReference type="GO" id="GO:0009236">
    <property type="term" value="P:cobalamin biosynthetic process"/>
    <property type="evidence" value="ECO:0007669"/>
    <property type="project" value="UniProtKB-UniRule"/>
</dbReference>
<dbReference type="HAMAP" id="MF_00719">
    <property type="entry name" value="CobS"/>
    <property type="match status" value="1"/>
</dbReference>
<dbReference type="InterPro" id="IPR003805">
    <property type="entry name" value="CobS"/>
</dbReference>
<dbReference type="NCBIfam" id="TIGR00317">
    <property type="entry name" value="cobS"/>
    <property type="match status" value="1"/>
</dbReference>
<dbReference type="NCBIfam" id="NF001276">
    <property type="entry name" value="PRK00235.1-2"/>
    <property type="match status" value="1"/>
</dbReference>
<dbReference type="PANTHER" id="PTHR34148">
    <property type="entry name" value="ADENOSYLCOBINAMIDE-GDP RIBAZOLETRANSFERASE"/>
    <property type="match status" value="1"/>
</dbReference>
<dbReference type="PANTHER" id="PTHR34148:SF1">
    <property type="entry name" value="ADENOSYLCOBINAMIDE-GDP RIBAZOLETRANSFERASE"/>
    <property type="match status" value="1"/>
</dbReference>
<dbReference type="Pfam" id="PF02654">
    <property type="entry name" value="CobS"/>
    <property type="match status" value="1"/>
</dbReference>
<organism>
    <name type="scientific">Rhizobium etli (strain CIAT 652)</name>
    <dbReference type="NCBI Taxonomy" id="491916"/>
    <lineage>
        <taxon>Bacteria</taxon>
        <taxon>Pseudomonadati</taxon>
        <taxon>Pseudomonadota</taxon>
        <taxon>Alphaproteobacteria</taxon>
        <taxon>Hyphomicrobiales</taxon>
        <taxon>Rhizobiaceae</taxon>
        <taxon>Rhizobium/Agrobacterium group</taxon>
        <taxon>Rhizobium</taxon>
    </lineage>
</organism>
<name>COBS_RHIE6</name>
<accession>B3PQS4</accession>
<keyword id="KW-0997">Cell inner membrane</keyword>
<keyword id="KW-1003">Cell membrane</keyword>
<keyword id="KW-0169">Cobalamin biosynthesis</keyword>
<keyword id="KW-0460">Magnesium</keyword>
<keyword id="KW-0472">Membrane</keyword>
<keyword id="KW-0808">Transferase</keyword>
<keyword id="KW-0812">Transmembrane</keyword>
<keyword id="KW-1133">Transmembrane helix</keyword>
<feature type="chain" id="PRO_1000132594" description="Adenosylcobinamide-GDP ribazoletransferase">
    <location>
        <begin position="1"/>
        <end position="260"/>
    </location>
</feature>
<feature type="transmembrane region" description="Helical" evidence="1">
    <location>
        <begin position="40"/>
        <end position="60"/>
    </location>
</feature>
<feature type="transmembrane region" description="Helical" evidence="1">
    <location>
        <begin position="64"/>
        <end position="84"/>
    </location>
</feature>
<feature type="transmembrane region" description="Helical" evidence="1">
    <location>
        <begin position="117"/>
        <end position="137"/>
    </location>
</feature>
<feature type="transmembrane region" description="Helical" evidence="1">
    <location>
        <begin position="142"/>
        <end position="162"/>
    </location>
</feature>
<feature type="transmembrane region" description="Helical" evidence="1">
    <location>
        <begin position="189"/>
        <end position="209"/>
    </location>
</feature>
<feature type="transmembrane region" description="Helical" evidence="1">
    <location>
        <begin position="210"/>
        <end position="230"/>
    </location>
</feature>
<proteinExistence type="inferred from homology"/>
<comment type="function">
    <text evidence="1">Joins adenosylcobinamide-GDP and alpha-ribazole to generate adenosylcobalamin (Ado-cobalamin). Also synthesizes adenosylcobalamin 5'-phosphate from adenosylcobinamide-GDP and alpha-ribazole 5'-phosphate.</text>
</comment>
<comment type="catalytic activity">
    <reaction evidence="1">
        <text>alpha-ribazole + adenosylcob(III)inamide-GDP = adenosylcob(III)alamin + GMP + H(+)</text>
        <dbReference type="Rhea" id="RHEA:16049"/>
        <dbReference type="ChEBI" id="CHEBI:10329"/>
        <dbReference type="ChEBI" id="CHEBI:15378"/>
        <dbReference type="ChEBI" id="CHEBI:18408"/>
        <dbReference type="ChEBI" id="CHEBI:58115"/>
        <dbReference type="ChEBI" id="CHEBI:60487"/>
        <dbReference type="EC" id="2.7.8.26"/>
    </reaction>
</comment>
<comment type="catalytic activity">
    <reaction evidence="1">
        <text>alpha-ribazole 5'-phosphate + adenosylcob(III)inamide-GDP = adenosylcob(III)alamin 5'-phosphate + GMP + H(+)</text>
        <dbReference type="Rhea" id="RHEA:23560"/>
        <dbReference type="ChEBI" id="CHEBI:15378"/>
        <dbReference type="ChEBI" id="CHEBI:57918"/>
        <dbReference type="ChEBI" id="CHEBI:58115"/>
        <dbReference type="ChEBI" id="CHEBI:60487"/>
        <dbReference type="ChEBI" id="CHEBI:60493"/>
        <dbReference type="EC" id="2.7.8.26"/>
    </reaction>
</comment>
<comment type="cofactor">
    <cofactor evidence="1">
        <name>Mg(2+)</name>
        <dbReference type="ChEBI" id="CHEBI:18420"/>
    </cofactor>
</comment>
<comment type="pathway">
    <text evidence="1">Cofactor biosynthesis; adenosylcobalamin biosynthesis; adenosylcobalamin from cob(II)yrinate a,c-diamide: step 7/7.</text>
</comment>
<comment type="subcellular location">
    <subcellularLocation>
        <location evidence="1">Cell inner membrane</location>
        <topology evidence="1">Multi-pass membrane protein</topology>
    </subcellularLocation>
</comment>
<comment type="similarity">
    <text evidence="1">Belongs to the CobS family.</text>
</comment>
<sequence>MKIKDYAVDTARAVAFLSRLPMPPALFNGYDGRLGRLVRAFPFAGLLIGFVPAFALLLLLGLRADPLVAALVALAVQALVTGALHEDGLADTADGIGGGKSREQSLIIMKDSRIGTYGAIALILSFAIRAAALAAIVRHSSPLAAVLAIPAVAALSRGAITWHWQRLPPAKADGVAASTGQPDEAAMHFALVAAGLLAALLIWPAFGLWPLVASLLAAGAAGFVCTVFIRRRLAGHTGDTLGATQQICEIATLCALATAL</sequence>